<comment type="function">
    <text evidence="1">Catalyzes the catabolism of the allantoin degradation intermediate (S)-ureidoglycolate, generating urea and glyoxylate. Involved in the utilization of allantoin as nitrogen source.</text>
</comment>
<comment type="catalytic activity">
    <reaction evidence="1">
        <text>(S)-ureidoglycolate = urea + glyoxylate</text>
        <dbReference type="Rhea" id="RHEA:11304"/>
        <dbReference type="ChEBI" id="CHEBI:16199"/>
        <dbReference type="ChEBI" id="CHEBI:36655"/>
        <dbReference type="ChEBI" id="CHEBI:57296"/>
        <dbReference type="EC" id="4.3.2.3"/>
    </reaction>
</comment>
<comment type="cofactor">
    <cofactor evidence="1">
        <name>Ni(2+)</name>
        <dbReference type="ChEBI" id="CHEBI:49786"/>
    </cofactor>
</comment>
<comment type="pathway">
    <text evidence="1">Nitrogen metabolism; (S)-allantoin degradation.</text>
</comment>
<comment type="subunit">
    <text evidence="1">Homodimer.</text>
</comment>
<comment type="similarity">
    <text evidence="1">Belongs to the ureidoglycolate lyase family.</text>
</comment>
<gene>
    <name evidence="1" type="primary">allA</name>
    <name type="ordered locus">SPAB_03049</name>
</gene>
<reference key="1">
    <citation type="submission" date="2007-11" db="EMBL/GenBank/DDBJ databases">
        <authorList>
            <consortium name="The Salmonella enterica serovar Paratyphi B Genome Sequencing Project"/>
            <person name="McClelland M."/>
            <person name="Sanderson E.K."/>
            <person name="Porwollik S."/>
            <person name="Spieth J."/>
            <person name="Clifton W.S."/>
            <person name="Fulton R."/>
            <person name="Cordes M."/>
            <person name="Wollam A."/>
            <person name="Shah N."/>
            <person name="Pepin K."/>
            <person name="Bhonagiri V."/>
            <person name="Nash W."/>
            <person name="Johnson M."/>
            <person name="Thiruvilangam P."/>
            <person name="Wilson R."/>
        </authorList>
    </citation>
    <scope>NUCLEOTIDE SEQUENCE [LARGE SCALE GENOMIC DNA]</scope>
    <source>
        <strain>ATCC BAA-1250 / SPB7</strain>
    </source>
</reference>
<organism>
    <name type="scientific">Salmonella paratyphi B (strain ATCC BAA-1250 / SPB7)</name>
    <dbReference type="NCBI Taxonomy" id="1016998"/>
    <lineage>
        <taxon>Bacteria</taxon>
        <taxon>Pseudomonadati</taxon>
        <taxon>Pseudomonadota</taxon>
        <taxon>Gammaproteobacteria</taxon>
        <taxon>Enterobacterales</taxon>
        <taxon>Enterobacteriaceae</taxon>
        <taxon>Salmonella</taxon>
    </lineage>
</organism>
<evidence type="ECO:0000255" key="1">
    <source>
        <dbReference type="HAMAP-Rule" id="MF_00616"/>
    </source>
</evidence>
<feature type="chain" id="PRO_1000082581" description="Ureidoglycolate lyase">
    <location>
        <begin position="1"/>
        <end position="160"/>
    </location>
</feature>
<proteinExistence type="inferred from homology"/>
<name>ALLA_SALPB</name>
<dbReference type="EC" id="4.3.2.3" evidence="1"/>
<dbReference type="EMBL" id="CP000886">
    <property type="protein sequence ID" value="ABX68412.1"/>
    <property type="molecule type" value="Genomic_DNA"/>
</dbReference>
<dbReference type="RefSeq" id="WP_000764659.1">
    <property type="nucleotide sequence ID" value="NC_010102.1"/>
</dbReference>
<dbReference type="SMR" id="A9MW53"/>
<dbReference type="KEGG" id="spq:SPAB_03049"/>
<dbReference type="PATRIC" id="fig|1016998.12.peg.2877"/>
<dbReference type="HOGENOM" id="CLU_070848_1_1_6"/>
<dbReference type="BioCyc" id="SENT1016998:SPAB_RS12445-MONOMER"/>
<dbReference type="UniPathway" id="UPA00395"/>
<dbReference type="Proteomes" id="UP000008556">
    <property type="component" value="Chromosome"/>
</dbReference>
<dbReference type="GO" id="GO:0004848">
    <property type="term" value="F:ureidoglycolate hydrolase activity"/>
    <property type="evidence" value="ECO:0007669"/>
    <property type="project" value="InterPro"/>
</dbReference>
<dbReference type="GO" id="GO:0050385">
    <property type="term" value="F:ureidoglycolate lyase activity"/>
    <property type="evidence" value="ECO:0007669"/>
    <property type="project" value="UniProtKB-UniRule"/>
</dbReference>
<dbReference type="GO" id="GO:0000256">
    <property type="term" value="P:allantoin catabolic process"/>
    <property type="evidence" value="ECO:0007669"/>
    <property type="project" value="UniProtKB-UniRule"/>
</dbReference>
<dbReference type="GO" id="GO:0006145">
    <property type="term" value="P:purine nucleobase catabolic process"/>
    <property type="evidence" value="ECO:0007669"/>
    <property type="project" value="UniProtKB-UniRule"/>
</dbReference>
<dbReference type="CDD" id="cd20298">
    <property type="entry name" value="cupin_UAH"/>
    <property type="match status" value="1"/>
</dbReference>
<dbReference type="FunFam" id="2.60.120.480:FF:000001">
    <property type="entry name" value="Ureidoglycolate lyase"/>
    <property type="match status" value="1"/>
</dbReference>
<dbReference type="Gene3D" id="2.60.120.480">
    <property type="entry name" value="Ureidoglycolate hydrolase"/>
    <property type="match status" value="1"/>
</dbReference>
<dbReference type="HAMAP" id="MF_00616">
    <property type="entry name" value="Ureidogly_lyase"/>
    <property type="match status" value="1"/>
</dbReference>
<dbReference type="InterPro" id="IPR011051">
    <property type="entry name" value="RmlC_Cupin_sf"/>
</dbReference>
<dbReference type="InterPro" id="IPR047233">
    <property type="entry name" value="UAH_cupin"/>
</dbReference>
<dbReference type="InterPro" id="IPR007247">
    <property type="entry name" value="Ureidogly_lyase"/>
</dbReference>
<dbReference type="InterPro" id="IPR023525">
    <property type="entry name" value="Ureidogly_lyase_bac"/>
</dbReference>
<dbReference type="InterPro" id="IPR024060">
    <property type="entry name" value="Ureidoglycolate_lyase_dom_sf"/>
</dbReference>
<dbReference type="NCBIfam" id="NF002948">
    <property type="entry name" value="PRK03606.1-1"/>
    <property type="match status" value="1"/>
</dbReference>
<dbReference type="NCBIfam" id="NF009932">
    <property type="entry name" value="PRK13395.1"/>
    <property type="match status" value="1"/>
</dbReference>
<dbReference type="PANTHER" id="PTHR21221">
    <property type="entry name" value="UREIDOGLYCOLATE HYDROLASE"/>
    <property type="match status" value="1"/>
</dbReference>
<dbReference type="PANTHER" id="PTHR21221:SF1">
    <property type="entry name" value="UREIDOGLYCOLATE LYASE"/>
    <property type="match status" value="1"/>
</dbReference>
<dbReference type="Pfam" id="PF04115">
    <property type="entry name" value="Ureidogly_lyase"/>
    <property type="match status" value="1"/>
</dbReference>
<dbReference type="PIRSF" id="PIRSF017306">
    <property type="entry name" value="Ureidogly_hydro"/>
    <property type="match status" value="1"/>
</dbReference>
<dbReference type="SUPFAM" id="SSF51182">
    <property type="entry name" value="RmlC-like cupins"/>
    <property type="match status" value="1"/>
</dbReference>
<sequence>MKLEVLPLDQKTFSAYGDVIETQERDFFHINNGLVERYHDLAKVEVLEQDRTLISINRAQPAAMPIVVHELERHPLGTQAFVPMNGEAFVVIVALGDDKPDLSTLRAFISNGRQGVNYHRNVWHHPLFAWQTVTDFLTVDRGGSDNCDVESIPTHELCFA</sequence>
<accession>A9MW53</accession>
<keyword id="KW-0456">Lyase</keyword>
<keyword id="KW-0659">Purine metabolism</keyword>
<protein>
    <recommendedName>
        <fullName evidence="1">Ureidoglycolate lyase</fullName>
        <ecNumber evidence="1">4.3.2.3</ecNumber>
    </recommendedName>
    <alternativeName>
        <fullName evidence="1">Ureidoglycolatase</fullName>
    </alternativeName>
</protein>